<organism>
    <name type="scientific">Borrelia hermsii (strain HS1 / DAH)</name>
    <dbReference type="NCBI Taxonomy" id="314723"/>
    <lineage>
        <taxon>Bacteria</taxon>
        <taxon>Pseudomonadati</taxon>
        <taxon>Spirochaetota</taxon>
        <taxon>Spirochaetia</taxon>
        <taxon>Spirochaetales</taxon>
        <taxon>Borreliaceae</taxon>
        <taxon>Borrelia</taxon>
    </lineage>
</organism>
<keyword id="KW-0963">Cytoplasm</keyword>
<keyword id="KW-0251">Elongation factor</keyword>
<keyword id="KW-0648">Protein biosynthesis</keyword>
<comment type="function">
    <text evidence="1">Involved in peptide bond synthesis. Stimulates efficient translation and peptide-bond synthesis on native or reconstituted 70S ribosomes in vitro. Probably functions indirectly by altering the affinity of the ribosome for aminoacyl-tRNA, thus increasing their reactivity as acceptors for peptidyl transferase.</text>
</comment>
<comment type="pathway">
    <text evidence="1">Protein biosynthesis; polypeptide chain elongation.</text>
</comment>
<comment type="subcellular location">
    <subcellularLocation>
        <location evidence="1">Cytoplasm</location>
    </subcellularLocation>
</comment>
<comment type="similarity">
    <text evidence="1">Belongs to the elongation factor P family.</text>
</comment>
<evidence type="ECO:0000255" key="1">
    <source>
        <dbReference type="HAMAP-Rule" id="MF_00141"/>
    </source>
</evidence>
<name>EFP_BORHD</name>
<protein>
    <recommendedName>
        <fullName evidence="1">Elongation factor P</fullName>
        <shortName evidence="1">EF-P</shortName>
    </recommendedName>
</protein>
<gene>
    <name evidence="1" type="primary">efp</name>
    <name type="ordered locus">BH0214</name>
</gene>
<dbReference type="EMBL" id="CP000048">
    <property type="protein sequence ID" value="AAX16730.1"/>
    <property type="molecule type" value="Genomic_DNA"/>
</dbReference>
<dbReference type="RefSeq" id="WP_012421987.1">
    <property type="nucleotide sequence ID" value="NZ_CP073136.1"/>
</dbReference>
<dbReference type="SMR" id="B2RZS4"/>
<dbReference type="GeneID" id="71843025"/>
<dbReference type="KEGG" id="bhr:BH0214"/>
<dbReference type="HOGENOM" id="CLU_074944_0_2_12"/>
<dbReference type="UniPathway" id="UPA00345"/>
<dbReference type="Proteomes" id="UP000008834">
    <property type="component" value="Chromosome"/>
</dbReference>
<dbReference type="GO" id="GO:0005737">
    <property type="term" value="C:cytoplasm"/>
    <property type="evidence" value="ECO:0007669"/>
    <property type="project" value="UniProtKB-SubCell"/>
</dbReference>
<dbReference type="GO" id="GO:0003746">
    <property type="term" value="F:translation elongation factor activity"/>
    <property type="evidence" value="ECO:0007669"/>
    <property type="project" value="UniProtKB-UniRule"/>
</dbReference>
<dbReference type="GO" id="GO:0043043">
    <property type="term" value="P:peptide biosynthetic process"/>
    <property type="evidence" value="ECO:0007669"/>
    <property type="project" value="InterPro"/>
</dbReference>
<dbReference type="FunFam" id="2.40.50.140:FF:000004">
    <property type="entry name" value="Elongation factor P"/>
    <property type="match status" value="1"/>
</dbReference>
<dbReference type="Gene3D" id="2.30.30.30">
    <property type="match status" value="1"/>
</dbReference>
<dbReference type="Gene3D" id="2.40.50.140">
    <property type="entry name" value="Nucleic acid-binding proteins"/>
    <property type="match status" value="2"/>
</dbReference>
<dbReference type="HAMAP" id="MF_00141">
    <property type="entry name" value="EF_P"/>
    <property type="match status" value="1"/>
</dbReference>
<dbReference type="InterPro" id="IPR015365">
    <property type="entry name" value="Elong-fact-P_C"/>
</dbReference>
<dbReference type="InterPro" id="IPR012340">
    <property type="entry name" value="NA-bd_OB-fold"/>
</dbReference>
<dbReference type="InterPro" id="IPR014722">
    <property type="entry name" value="Rib_uL2_dom2"/>
</dbReference>
<dbReference type="InterPro" id="IPR020599">
    <property type="entry name" value="Transl_elong_fac_P/YeiP"/>
</dbReference>
<dbReference type="InterPro" id="IPR013185">
    <property type="entry name" value="Transl_elong_KOW-like"/>
</dbReference>
<dbReference type="InterPro" id="IPR001059">
    <property type="entry name" value="Transl_elong_P/YeiP_cen"/>
</dbReference>
<dbReference type="InterPro" id="IPR011768">
    <property type="entry name" value="Transl_elongation_fac_P"/>
</dbReference>
<dbReference type="InterPro" id="IPR008991">
    <property type="entry name" value="Translation_prot_SH3-like_sf"/>
</dbReference>
<dbReference type="NCBIfam" id="TIGR00038">
    <property type="entry name" value="efp"/>
    <property type="match status" value="1"/>
</dbReference>
<dbReference type="NCBIfam" id="NF001810">
    <property type="entry name" value="PRK00529.1"/>
    <property type="match status" value="1"/>
</dbReference>
<dbReference type="PANTHER" id="PTHR30053">
    <property type="entry name" value="ELONGATION FACTOR P"/>
    <property type="match status" value="1"/>
</dbReference>
<dbReference type="PANTHER" id="PTHR30053:SF12">
    <property type="entry name" value="ELONGATION FACTOR P (EF-P) FAMILY PROTEIN"/>
    <property type="match status" value="1"/>
</dbReference>
<dbReference type="Pfam" id="PF01132">
    <property type="entry name" value="EFP"/>
    <property type="match status" value="1"/>
</dbReference>
<dbReference type="Pfam" id="PF08207">
    <property type="entry name" value="EFP_N"/>
    <property type="match status" value="1"/>
</dbReference>
<dbReference type="Pfam" id="PF09285">
    <property type="entry name" value="Elong-fact-P_C"/>
    <property type="match status" value="1"/>
</dbReference>
<dbReference type="PIRSF" id="PIRSF005901">
    <property type="entry name" value="EF-P"/>
    <property type="match status" value="1"/>
</dbReference>
<dbReference type="SMART" id="SM01185">
    <property type="entry name" value="EFP"/>
    <property type="match status" value="1"/>
</dbReference>
<dbReference type="SMART" id="SM00841">
    <property type="entry name" value="Elong-fact-P_C"/>
    <property type="match status" value="1"/>
</dbReference>
<dbReference type="SUPFAM" id="SSF50249">
    <property type="entry name" value="Nucleic acid-binding proteins"/>
    <property type="match status" value="2"/>
</dbReference>
<dbReference type="SUPFAM" id="SSF50104">
    <property type="entry name" value="Translation proteins SH3-like domain"/>
    <property type="match status" value="1"/>
</dbReference>
<reference key="1">
    <citation type="submission" date="2004-12" db="EMBL/GenBank/DDBJ databases">
        <title>The genome sequence of Borrelia hermsii and Borrelia turicatae: comparative analysis of two agents of endemic N. America relapsing fever.</title>
        <authorList>
            <person name="Porcella S.F."/>
            <person name="Raffel S.J."/>
            <person name="Schrumpf M.E."/>
            <person name="Montgomery B."/>
            <person name="Smith T."/>
            <person name="Schwan T.G."/>
        </authorList>
    </citation>
    <scope>NUCLEOTIDE SEQUENCE [LARGE SCALE GENOMIC DNA]</scope>
    <source>
        <strain>HS1 / DAH</strain>
    </source>
</reference>
<proteinExistence type="inferred from homology"/>
<accession>B2RZS4</accession>
<sequence>MGTIKSGEIEKGSFLLFKGMPHIVLEREFSKMGRGGAIVRLKLKNLKNKSVVKETLKGADTVEEIEVLEVSSQYLYRDSENLIFMDLETYDQFNVNLREVPNIEDKVLFFQEAEVYSLVKWDNEVIDLKLPPKVAFEVVAAEAAVKGDTVTNAMKNVTLHTGLVVKAPLFINVGDKILVNSETKEYAERVKE</sequence>
<feature type="chain" id="PRO_1000096124" description="Elongation factor P">
    <location>
        <begin position="1"/>
        <end position="192"/>
    </location>
</feature>